<proteinExistence type="inferred from homology"/>
<sequence>MLDLGLSKMALIGVVALVVLGPERLPRVARTAGALFGRAQRYINDVKAEVSREIELDALRTMKTDFESAARNVETTIHDNLREHEKELNDTWHSAVGGLDGAAGDAGSVGSPGSDTPAAPSWRGSSAALAPKRRNWRIKQAATPVWYKRATTRRTHVQSGAARVARHQPASLRRPTRFF</sequence>
<evidence type="ECO:0000255" key="1">
    <source>
        <dbReference type="HAMAP-Rule" id="MF_00237"/>
    </source>
</evidence>
<evidence type="ECO:0000256" key="2">
    <source>
        <dbReference type="SAM" id="MobiDB-lite"/>
    </source>
</evidence>
<dbReference type="EMBL" id="CP000378">
    <property type="protein sequence ID" value="ABF77568.1"/>
    <property type="molecule type" value="Genomic_DNA"/>
</dbReference>
<dbReference type="SMR" id="Q1BS37"/>
<dbReference type="HOGENOM" id="CLU_086034_1_1_4"/>
<dbReference type="GO" id="GO:0033281">
    <property type="term" value="C:TAT protein transport complex"/>
    <property type="evidence" value="ECO:0007669"/>
    <property type="project" value="UniProtKB-UniRule"/>
</dbReference>
<dbReference type="GO" id="GO:0008320">
    <property type="term" value="F:protein transmembrane transporter activity"/>
    <property type="evidence" value="ECO:0007669"/>
    <property type="project" value="UniProtKB-UniRule"/>
</dbReference>
<dbReference type="GO" id="GO:0043953">
    <property type="term" value="P:protein transport by the Tat complex"/>
    <property type="evidence" value="ECO:0007669"/>
    <property type="project" value="UniProtKB-UniRule"/>
</dbReference>
<dbReference type="Gene3D" id="1.20.5.3310">
    <property type="match status" value="1"/>
</dbReference>
<dbReference type="HAMAP" id="MF_00237">
    <property type="entry name" value="TatB"/>
    <property type="match status" value="1"/>
</dbReference>
<dbReference type="InterPro" id="IPR003369">
    <property type="entry name" value="TatA/B/E"/>
</dbReference>
<dbReference type="InterPro" id="IPR018448">
    <property type="entry name" value="TatB"/>
</dbReference>
<dbReference type="NCBIfam" id="TIGR01410">
    <property type="entry name" value="tatB"/>
    <property type="match status" value="1"/>
</dbReference>
<dbReference type="PANTHER" id="PTHR33162">
    <property type="entry name" value="SEC-INDEPENDENT PROTEIN TRANSLOCASE PROTEIN TATA, CHLOROPLASTIC"/>
    <property type="match status" value="1"/>
</dbReference>
<dbReference type="PANTHER" id="PTHR33162:SF1">
    <property type="entry name" value="SEC-INDEPENDENT PROTEIN TRANSLOCASE PROTEIN TATA, CHLOROPLASTIC"/>
    <property type="match status" value="1"/>
</dbReference>
<dbReference type="Pfam" id="PF02416">
    <property type="entry name" value="TatA_B_E"/>
    <property type="match status" value="1"/>
</dbReference>
<dbReference type="PRINTS" id="PR01506">
    <property type="entry name" value="TATBPROTEIN"/>
</dbReference>
<reference key="1">
    <citation type="submission" date="2006-05" db="EMBL/GenBank/DDBJ databases">
        <title>Complete sequence of chromosome 1 of Burkholderia cenocepacia AU 1054.</title>
        <authorList>
            <consortium name="US DOE Joint Genome Institute"/>
            <person name="Copeland A."/>
            <person name="Lucas S."/>
            <person name="Lapidus A."/>
            <person name="Barry K."/>
            <person name="Detter J.C."/>
            <person name="Glavina del Rio T."/>
            <person name="Hammon N."/>
            <person name="Israni S."/>
            <person name="Dalin E."/>
            <person name="Tice H."/>
            <person name="Pitluck S."/>
            <person name="Chain P."/>
            <person name="Malfatti S."/>
            <person name="Shin M."/>
            <person name="Vergez L."/>
            <person name="Schmutz J."/>
            <person name="Larimer F."/>
            <person name="Land M."/>
            <person name="Hauser L."/>
            <person name="Kyrpides N."/>
            <person name="Lykidis A."/>
            <person name="LiPuma J.J."/>
            <person name="Konstantinidis K."/>
            <person name="Tiedje J.M."/>
            <person name="Richardson P."/>
        </authorList>
    </citation>
    <scope>NUCLEOTIDE SEQUENCE [LARGE SCALE GENOMIC DNA]</scope>
    <source>
        <strain>AU 1054</strain>
    </source>
</reference>
<accession>Q1BS37</accession>
<organism>
    <name type="scientific">Burkholderia orbicola (strain AU 1054)</name>
    <dbReference type="NCBI Taxonomy" id="331271"/>
    <lineage>
        <taxon>Bacteria</taxon>
        <taxon>Pseudomonadati</taxon>
        <taxon>Pseudomonadota</taxon>
        <taxon>Betaproteobacteria</taxon>
        <taxon>Burkholderiales</taxon>
        <taxon>Burkholderiaceae</taxon>
        <taxon>Burkholderia</taxon>
        <taxon>Burkholderia cepacia complex</taxon>
        <taxon>Burkholderia orbicola</taxon>
    </lineage>
</organism>
<gene>
    <name evidence="1" type="primary">tatB</name>
    <name type="ordered locus">Bcen_2670</name>
</gene>
<comment type="function">
    <text evidence="1">Part of the twin-arginine translocation (Tat) system that transports large folded proteins containing a characteristic twin-arginine motif in their signal peptide across membranes. Together with TatC, TatB is part of a receptor directly interacting with Tat signal peptides. TatB may form an oligomeric binding site that transiently accommodates folded Tat precursor proteins before their translocation.</text>
</comment>
<comment type="subunit">
    <text evidence="1">The Tat system comprises two distinct complexes: a TatABC complex, containing multiple copies of TatA, TatB and TatC subunits, and a separate TatA complex, containing only TatA subunits. Substrates initially bind to the TatABC complex, which probably triggers association of the separate TatA complex to form the active translocon.</text>
</comment>
<comment type="subcellular location">
    <subcellularLocation>
        <location evidence="1">Cell inner membrane</location>
        <topology evidence="1">Single-pass membrane protein</topology>
    </subcellularLocation>
</comment>
<comment type="similarity">
    <text evidence="1">Belongs to the TatB family.</text>
</comment>
<name>TATB_BURO1</name>
<feature type="chain" id="PRO_0000301149" description="Sec-independent protein translocase protein TatB">
    <location>
        <begin position="1"/>
        <end position="179"/>
    </location>
</feature>
<feature type="transmembrane region" description="Helical" evidence="1">
    <location>
        <begin position="1"/>
        <end position="21"/>
    </location>
</feature>
<feature type="region of interest" description="Disordered" evidence="2">
    <location>
        <begin position="101"/>
        <end position="134"/>
    </location>
</feature>
<feature type="compositionally biased region" description="Low complexity" evidence="2">
    <location>
        <begin position="101"/>
        <end position="115"/>
    </location>
</feature>
<protein>
    <recommendedName>
        <fullName evidence="1">Sec-independent protein translocase protein TatB</fullName>
    </recommendedName>
</protein>
<keyword id="KW-0997">Cell inner membrane</keyword>
<keyword id="KW-1003">Cell membrane</keyword>
<keyword id="KW-0472">Membrane</keyword>
<keyword id="KW-0653">Protein transport</keyword>
<keyword id="KW-0811">Translocation</keyword>
<keyword id="KW-0812">Transmembrane</keyword>
<keyword id="KW-1133">Transmembrane helix</keyword>
<keyword id="KW-0813">Transport</keyword>